<reference key="1">
    <citation type="journal article" date="2011" name="Am. J. Respir. Cell Mol. Biol.">
        <title>Cloning and Characterization of Human MUC19 Gene.</title>
        <authorList>
            <person name="Zhu L."/>
            <person name="Lee P."/>
            <person name="Yu D."/>
            <person name="Tao S."/>
            <person name="Chen Y."/>
        </authorList>
    </citation>
    <scope>NUCLEOTIDE SEQUENCE [MRNA]</scope>
    <scope>TISSUE SPECIFICITY</scope>
    <source>
        <tissue>Salivary gland</tissue>
    </source>
</reference>
<reference key="2">
    <citation type="journal article" date="2006" name="Nature">
        <title>The finished DNA sequence of human chromosome 12.</title>
        <authorList>
            <person name="Scherer S.E."/>
            <person name="Muzny D.M."/>
            <person name="Buhay C.J."/>
            <person name="Chen R."/>
            <person name="Cree A."/>
            <person name="Ding Y."/>
            <person name="Dugan-Rocha S."/>
            <person name="Gill R."/>
            <person name="Gunaratne P."/>
            <person name="Harris R.A."/>
            <person name="Hawes A.C."/>
            <person name="Hernandez J."/>
            <person name="Hodgson A.V."/>
            <person name="Hume J."/>
            <person name="Jackson A."/>
            <person name="Khan Z.M."/>
            <person name="Kovar-Smith C."/>
            <person name="Lewis L.R."/>
            <person name="Lozado R.J."/>
            <person name="Metzker M.L."/>
            <person name="Milosavljevic A."/>
            <person name="Miner G.R."/>
            <person name="Montgomery K.T."/>
            <person name="Morgan M.B."/>
            <person name="Nazareth L.V."/>
            <person name="Scott G."/>
            <person name="Sodergren E."/>
            <person name="Song X.-Z."/>
            <person name="Steffen D."/>
            <person name="Lovering R.C."/>
            <person name="Wheeler D.A."/>
            <person name="Worley K.C."/>
            <person name="Yuan Y."/>
            <person name="Zhang Z."/>
            <person name="Adams C.Q."/>
            <person name="Ansari-Lari M.A."/>
            <person name="Ayele M."/>
            <person name="Brown M.J."/>
            <person name="Chen G."/>
            <person name="Chen Z."/>
            <person name="Clerc-Blankenburg K.P."/>
            <person name="Davis C."/>
            <person name="Delgado O."/>
            <person name="Dinh H.H."/>
            <person name="Draper H."/>
            <person name="Gonzalez-Garay M.L."/>
            <person name="Havlak P."/>
            <person name="Jackson L.R."/>
            <person name="Jacob L.S."/>
            <person name="Kelly S.H."/>
            <person name="Li L."/>
            <person name="Li Z."/>
            <person name="Liu J."/>
            <person name="Liu W."/>
            <person name="Lu J."/>
            <person name="Maheshwari M."/>
            <person name="Nguyen B.-V."/>
            <person name="Okwuonu G.O."/>
            <person name="Pasternak S."/>
            <person name="Perez L.M."/>
            <person name="Plopper F.J.H."/>
            <person name="Santibanez J."/>
            <person name="Shen H."/>
            <person name="Tabor P.E."/>
            <person name="Verduzco D."/>
            <person name="Waldron L."/>
            <person name="Wang Q."/>
            <person name="Williams G.A."/>
            <person name="Zhang J."/>
            <person name="Zhou J."/>
            <person name="Allen C.C."/>
            <person name="Amin A.G."/>
            <person name="Anyalebechi V."/>
            <person name="Bailey M."/>
            <person name="Barbaria J.A."/>
            <person name="Bimage K.E."/>
            <person name="Bryant N.P."/>
            <person name="Burch P.E."/>
            <person name="Burkett C.E."/>
            <person name="Burrell K.L."/>
            <person name="Calderon E."/>
            <person name="Cardenas V."/>
            <person name="Carter K."/>
            <person name="Casias K."/>
            <person name="Cavazos I."/>
            <person name="Cavazos S.R."/>
            <person name="Ceasar H."/>
            <person name="Chacko J."/>
            <person name="Chan S.N."/>
            <person name="Chavez D."/>
            <person name="Christopoulos C."/>
            <person name="Chu J."/>
            <person name="Cockrell R."/>
            <person name="Cox C.D."/>
            <person name="Dang M."/>
            <person name="Dathorne S.R."/>
            <person name="David R."/>
            <person name="Davis C.M."/>
            <person name="Davy-Carroll L."/>
            <person name="Deshazo D.R."/>
            <person name="Donlin J.E."/>
            <person name="D'Souza L."/>
            <person name="Eaves K.A."/>
            <person name="Egan A."/>
            <person name="Emery-Cohen A.J."/>
            <person name="Escotto M."/>
            <person name="Flagg N."/>
            <person name="Forbes L.D."/>
            <person name="Gabisi A.M."/>
            <person name="Garza M."/>
            <person name="Hamilton C."/>
            <person name="Henderson N."/>
            <person name="Hernandez O."/>
            <person name="Hines S."/>
            <person name="Hogues M.E."/>
            <person name="Huang M."/>
            <person name="Idlebird D.G."/>
            <person name="Johnson R."/>
            <person name="Jolivet A."/>
            <person name="Jones S."/>
            <person name="Kagan R."/>
            <person name="King L.M."/>
            <person name="Leal B."/>
            <person name="Lebow H."/>
            <person name="Lee S."/>
            <person name="LeVan J.M."/>
            <person name="Lewis L.C."/>
            <person name="London P."/>
            <person name="Lorensuhewa L.M."/>
            <person name="Loulseged H."/>
            <person name="Lovett D.A."/>
            <person name="Lucier A."/>
            <person name="Lucier R.L."/>
            <person name="Ma J."/>
            <person name="Madu R.C."/>
            <person name="Mapua P."/>
            <person name="Martindale A.D."/>
            <person name="Martinez E."/>
            <person name="Massey E."/>
            <person name="Mawhiney S."/>
            <person name="Meador M.G."/>
            <person name="Mendez S."/>
            <person name="Mercado C."/>
            <person name="Mercado I.C."/>
            <person name="Merritt C.E."/>
            <person name="Miner Z.L."/>
            <person name="Minja E."/>
            <person name="Mitchell T."/>
            <person name="Mohabbat F."/>
            <person name="Mohabbat K."/>
            <person name="Montgomery B."/>
            <person name="Moore N."/>
            <person name="Morris S."/>
            <person name="Munidasa M."/>
            <person name="Ngo R.N."/>
            <person name="Nguyen N.B."/>
            <person name="Nickerson E."/>
            <person name="Nwaokelemeh O.O."/>
            <person name="Nwokenkwo S."/>
            <person name="Obregon M."/>
            <person name="Oguh M."/>
            <person name="Oragunye N."/>
            <person name="Oviedo R.J."/>
            <person name="Parish B.J."/>
            <person name="Parker D.N."/>
            <person name="Parrish J."/>
            <person name="Parks K.L."/>
            <person name="Paul H.A."/>
            <person name="Payton B.A."/>
            <person name="Perez A."/>
            <person name="Perrin W."/>
            <person name="Pickens A."/>
            <person name="Primus E.L."/>
            <person name="Pu L.-L."/>
            <person name="Puazo M."/>
            <person name="Quiles M.M."/>
            <person name="Quiroz J.B."/>
            <person name="Rabata D."/>
            <person name="Reeves K."/>
            <person name="Ruiz S.J."/>
            <person name="Shao H."/>
            <person name="Sisson I."/>
            <person name="Sonaike T."/>
            <person name="Sorelle R.P."/>
            <person name="Sutton A.E."/>
            <person name="Svatek A.F."/>
            <person name="Svetz L.A."/>
            <person name="Tamerisa K.S."/>
            <person name="Taylor T.R."/>
            <person name="Teague B."/>
            <person name="Thomas N."/>
            <person name="Thorn R.D."/>
            <person name="Trejos Z.Y."/>
            <person name="Trevino B.K."/>
            <person name="Ukegbu O.N."/>
            <person name="Urban J.B."/>
            <person name="Vasquez L.I."/>
            <person name="Vera V.A."/>
            <person name="Villasana D.M."/>
            <person name="Wang L."/>
            <person name="Ward-Moore S."/>
            <person name="Warren J.T."/>
            <person name="Wei X."/>
            <person name="White F."/>
            <person name="Williamson A.L."/>
            <person name="Wleczyk R."/>
            <person name="Wooden H.S."/>
            <person name="Wooden S.H."/>
            <person name="Yen J."/>
            <person name="Yoon L."/>
            <person name="Yoon V."/>
            <person name="Zorrilla S.E."/>
            <person name="Nelson D."/>
            <person name="Kucherlapati R."/>
            <person name="Weinstock G."/>
            <person name="Gibbs R.A."/>
        </authorList>
    </citation>
    <scope>NUCLEOTIDE SEQUENCE [LARGE SCALE GENOMIC DNA]</scope>
</reference>
<reference key="3">
    <citation type="journal article" date="2004" name="Am. J. Respir. Cell Mol. Biol.">
        <title>Genome-wide search and identification of a novel gel-forming mucin MUC19/Muc19 in glandular tissues.</title>
        <authorList>
            <person name="Chen Y."/>
            <person name="Zhao Y.H."/>
            <person name="Kalaslavadi T.B."/>
            <person name="Hamati E."/>
            <person name="Nehrke K."/>
            <person name="Le A.D."/>
            <person name="Ann D.K."/>
            <person name="Wu R."/>
        </authorList>
    </citation>
    <scope>NUCLEOTIDE SEQUENCE [MRNA] OF 7684-8384 (ISOFORM 1)</scope>
    <scope>TISSUE SPECIFICITY</scope>
</reference>
<reference key="4">
    <citation type="journal article" date="2004" name="Nat. Genet.">
        <title>Complete sequencing and characterization of 21,243 full-length human cDNAs.</title>
        <authorList>
            <person name="Ota T."/>
            <person name="Suzuki Y."/>
            <person name="Nishikawa T."/>
            <person name="Otsuki T."/>
            <person name="Sugiyama T."/>
            <person name="Irie R."/>
            <person name="Wakamatsu A."/>
            <person name="Hayashi K."/>
            <person name="Sato H."/>
            <person name="Nagai K."/>
            <person name="Kimura K."/>
            <person name="Makita H."/>
            <person name="Sekine M."/>
            <person name="Obayashi M."/>
            <person name="Nishi T."/>
            <person name="Shibahara T."/>
            <person name="Tanaka T."/>
            <person name="Ishii S."/>
            <person name="Yamamoto J."/>
            <person name="Saito K."/>
            <person name="Kawai Y."/>
            <person name="Isono Y."/>
            <person name="Nakamura Y."/>
            <person name="Nagahari K."/>
            <person name="Murakami K."/>
            <person name="Yasuda T."/>
            <person name="Iwayanagi T."/>
            <person name="Wagatsuma M."/>
            <person name="Shiratori A."/>
            <person name="Sudo H."/>
            <person name="Hosoiri T."/>
            <person name="Kaku Y."/>
            <person name="Kodaira H."/>
            <person name="Kondo H."/>
            <person name="Sugawara M."/>
            <person name="Takahashi M."/>
            <person name="Kanda K."/>
            <person name="Yokoi T."/>
            <person name="Furuya T."/>
            <person name="Kikkawa E."/>
            <person name="Omura Y."/>
            <person name="Abe K."/>
            <person name="Kamihara K."/>
            <person name="Katsuta N."/>
            <person name="Sato K."/>
            <person name="Tanikawa M."/>
            <person name="Yamazaki M."/>
            <person name="Ninomiya K."/>
            <person name="Ishibashi T."/>
            <person name="Yamashita H."/>
            <person name="Murakawa K."/>
            <person name="Fujimori K."/>
            <person name="Tanai H."/>
            <person name="Kimata M."/>
            <person name="Watanabe M."/>
            <person name="Hiraoka S."/>
            <person name="Chiba Y."/>
            <person name="Ishida S."/>
            <person name="Ono Y."/>
            <person name="Takiguchi S."/>
            <person name="Watanabe S."/>
            <person name="Yosida M."/>
            <person name="Hotuta T."/>
            <person name="Kusano J."/>
            <person name="Kanehori K."/>
            <person name="Takahashi-Fujii A."/>
            <person name="Hara H."/>
            <person name="Tanase T.-O."/>
            <person name="Nomura Y."/>
            <person name="Togiya S."/>
            <person name="Komai F."/>
            <person name="Hara R."/>
            <person name="Takeuchi K."/>
            <person name="Arita M."/>
            <person name="Imose N."/>
            <person name="Musashino K."/>
            <person name="Yuuki H."/>
            <person name="Oshima A."/>
            <person name="Sasaki N."/>
            <person name="Aotsuka S."/>
            <person name="Yoshikawa Y."/>
            <person name="Matsunawa H."/>
            <person name="Ichihara T."/>
            <person name="Shiohata N."/>
            <person name="Sano S."/>
            <person name="Moriya S."/>
            <person name="Momiyama H."/>
            <person name="Satoh N."/>
            <person name="Takami S."/>
            <person name="Terashima Y."/>
            <person name="Suzuki O."/>
            <person name="Nakagawa S."/>
            <person name="Senoh A."/>
            <person name="Mizoguchi H."/>
            <person name="Goto Y."/>
            <person name="Shimizu F."/>
            <person name="Wakebe H."/>
            <person name="Hishigaki H."/>
            <person name="Watanabe T."/>
            <person name="Sugiyama A."/>
            <person name="Takemoto M."/>
            <person name="Kawakami B."/>
            <person name="Yamazaki M."/>
            <person name="Watanabe K."/>
            <person name="Kumagai A."/>
            <person name="Itakura S."/>
            <person name="Fukuzumi Y."/>
            <person name="Fujimori Y."/>
            <person name="Komiyama M."/>
            <person name="Tashiro H."/>
            <person name="Tanigami A."/>
            <person name="Fujiwara T."/>
            <person name="Ono T."/>
            <person name="Yamada K."/>
            <person name="Fujii Y."/>
            <person name="Ozaki K."/>
            <person name="Hirao M."/>
            <person name="Ohmori Y."/>
            <person name="Kawabata A."/>
            <person name="Hikiji T."/>
            <person name="Kobatake N."/>
            <person name="Inagaki H."/>
            <person name="Ikema Y."/>
            <person name="Okamoto S."/>
            <person name="Okitani R."/>
            <person name="Kawakami T."/>
            <person name="Noguchi S."/>
            <person name="Itoh T."/>
            <person name="Shigeta K."/>
            <person name="Senba T."/>
            <person name="Matsumura K."/>
            <person name="Nakajima Y."/>
            <person name="Mizuno T."/>
            <person name="Morinaga M."/>
            <person name="Sasaki M."/>
            <person name="Togashi T."/>
            <person name="Oyama M."/>
            <person name="Hata H."/>
            <person name="Watanabe M."/>
            <person name="Komatsu T."/>
            <person name="Mizushima-Sugano J."/>
            <person name="Satoh T."/>
            <person name="Shirai Y."/>
            <person name="Takahashi Y."/>
            <person name="Nakagawa K."/>
            <person name="Okumura K."/>
            <person name="Nagase T."/>
            <person name="Nomura N."/>
            <person name="Kikuchi H."/>
            <person name="Masuho Y."/>
            <person name="Yamashita R."/>
            <person name="Nakai K."/>
            <person name="Yada T."/>
            <person name="Nakamura Y."/>
            <person name="Ohara O."/>
            <person name="Isogai T."/>
            <person name="Sugano S."/>
        </authorList>
    </citation>
    <scope>NUCLEOTIDE SEQUENCE [LARGE SCALE MRNA] OF 7684-8384 (ISOFORM 2)</scope>
    <source>
        <tissue>Testis</tissue>
    </source>
</reference>
<reference key="5">
    <citation type="journal article" date="2007" name="Laryngoscope">
        <title>Mucin gene expression in human middle ear epithelium.</title>
        <authorList>
            <person name="Kerschner J.E."/>
        </authorList>
    </citation>
    <scope>TISSUE SPECIFICITY</scope>
</reference>
<reference key="6">
    <citation type="journal article" date="2008" name="Exp. Eye Res.">
        <title>MUC19 expression in human ocular surface and lacrimal gland and its alteration in Sjogren syndrome patients.</title>
        <authorList>
            <person name="Yu D.F."/>
            <person name="Chen Y."/>
            <person name="Han J.M."/>
            <person name="Zhang H."/>
            <person name="Chen X.P."/>
            <person name="Zou W.J."/>
            <person name="Liang L.Y."/>
            <person name="Xu C.C."/>
            <person name="Liu Z.G."/>
        </authorList>
    </citation>
    <scope>FUNCTION</scope>
    <scope>TISSUE SPECIFICITY</scope>
    <scope>INDUCTION</scope>
</reference>
<accession>Q7Z5P9</accession>
<accession>G3CIG0</accession>
<accession>Q8NA85</accession>
<proteinExistence type="evidence at protein level"/>
<sequence length="8384" mass="805253">MKLILWYLVVALWCFFKDVEALLYRQKSDGKIAASRSGGFSYGSSSSGDLDRKKPLFSLEFGSPGETEDKSRQRQDAGSPKSEDTPAGGFFNSSSSSGDSDRTKPFFSLGLGAPGKAEDKSGDSQDAGGSKSEDTPPGGFFYGSSSSGDSDKKKPLFSFEFGATGEDEDKSRERWDAGNSRSEDSPADSTNTRYGAGFSSSGASLDVGFGWGISDEKGLEVSKADGRETRGSGSAGGETIVFGPDAGSSVGTGSSGLKLGAGKGDAAFGFEVSDSNSFGDTGISSKTVEGNQTSSSGGSVSIDLGDTSFRSENQFVGGGSLNSISNLWDSGQEGFGINEIGGNGMSGSVSAEAGFKGFGSDSSSSGDSSARNGFENSSGISEDSGVILGSSDQHEVELSRTGGNRKRSSDPDEAGNLSPGSDVSDSGGNTWSSDSGSGGGGVTSSSEYSTSGPLNTPEKGSHIPEATPKYSETNAIIGEISTWSKGAYKSFNGRIFFFESSCPYTFCRHCIESGGDFNIEIKRNNDSEIEKITVLIDNNDVSIFGDTILVNGESVQIPYNNKLIHIKKYGEHNVLNSRRGILTLMWDKNNKLSLTLHKQYPTCGLCGNFNSTPGQDINEHIANSKIPGDCPNAVGKSYEVCEDGIQHCNKIIGTYFEKCGKVAALSNDYKMICIDEYCQTRDKTSTCDTYSELSRLCASDGPGTFESWRSDSDVVCGTQRCPEQHIYKECGPSNPATCSNVAPFQDSECVSGCTCPEGYLLDDIGEKGKCVLKAECPCESSGTVYQPGEVREGPCGSQCTCQDAKWSCTEALCPGRCKVEGSSLTTFDGVKYNFPGNCHFLAVHNEDWSISVELRPCPSGQTGTCLNSVTLLLNSSVPVDKYVFNSDGTVTNDKIRNQGYYYSDKIQIFNASSSYLQVETYFHVKLQIQIVPVMQLYVSMPPNQFTDTVGLCGSYNNKAEDDFMSSQNILEKTSQAFANSWEMMSCPKGNPSSCISIEKEKFAERHCGILLDSSGPLASCHPIVNPKPYHEECKKYTCTCENSQDCLCTILGNYVKACAEKETYIVGWRTGLCEHSCPSGLVFKYNVKACNSSCRSLSERDRSCDVEDVPVDGCTCPDAMYQNNEGNCVLKSQCDCYINDEVMQPGKLIHIDDNKCVCRDGILLCQIPIDLTLQNCSGGAEYVDCSDPKAQRRTNRTCSTRNIPVFDENLPCKRGCFCPEGMVRNSKGICVFPNDCPCSFGGREYDEGSVTSVGCNECTCIKGSWSCTQNECQTICHIYGEGHVRTFDGKSYSFDGLCQYSFLEDYCGHENGTFRILTESVPCCEDGLTCSRKIIVAFQDQNIVLQDGKVTAVKSTESKKCELNANAYSIHTVGLYLILKFQNGIIVIWDKNTRLSVILDPNWNGKVCGLCGNNNGDLKDDFTTRYSSVASGALEFGNSWKTSQECSDTVAQTFPCDSNPYCKAWAVRKCEILRDSTFRDCHNKVDPSAYHDACIEEACACDMEGKYLGFCTAVAMYAEACSAVGVCVSWRKPNLCPVYCDYYNAPGECRWHYEPCGTVTAKTCKDQLVGQKFSSLLEGCYAKCPDSAPYLDENTMKCVSLSECSCFYNDVIPAGGVIEDNCGRTCYCIAGQLECSETAPTNSTFAVSTTTATTILSTGAAITLVTGGPSTAASIPAITTSSSETTGTTLGPLTEPFTTGITETSVPIISTSGNAGMTGVVSPTVTGASGMAGTTGGVDAATTGAASENTSERAGTPRVSGETPAVGGGSTPGEAGPGATVSGSTGVSAGSITASPGASATSSESSKSGTTGPSVGGKTGATSSEATSSEGMSGVTGQSLGSTAGSDSEITAKTSFTGSSPPGKLTRPSPGSPGHFSGGTTEWGNVATTGAAGENTSGALGSTEGSVEATTSAGSGNTAGTSGTGDTGPGNTAVSGTPVVSPGATPGAPGSSTPGEADIGNTSFGKSGTPTVSAASTTSSPVSKHTDAASATAVTISGSKPGTPGTPGGATSGGKITSGWSSSGTSTGASNTPGATGSSTGQTDTSGPSAKVTGNYGQSSEIPGTIKSSSDVSGTMGQSDTTSGPSVAVTRTSEQSSGVTVASEPSVGVSGTTGPLAEISGTTRPLVSGLRTTGSSAEGSGTTGPSSRESVTTRPLAEGSGTSGQSVTGSRATGLSATELGTTVSFTGGLGTSRSSARETRTTGPSADGSGTTGPSVVRSGTTRLSVGVTRATESSPGVTGTTTPSAEESRTTGPSVLVTGTTGQSGQGSGTTGKSFIESGPSVVGSGTTGPTSAGLGTTAPSTRRSSTTKPSVGRTGTTGQSGAESGTTEPSARVAGVTGTSAEVSGRIEPSATESSTSRPLGETTGTTIPSMEGSEATGPSVIGSETTRLSVIGSGTTGTSSGGSGATRSSGGGMGTTGQSTARSETTGPLFGLTGTFGQSATVTGTSSNSAGVTTPEKSPGVAMTTGLLVEGSATTQPRILESETTESSAGVIVTSGQSARVTGATGPSAGETGTTEPSTEGSVAAVLFVIGSETTRPLDIGSGTTGTLSGGSSTTRSSDGTTGTTRKSTARSETTGLSGLTGTSGQLAGVTGTSSKSAGVTVTSEKSAGVAVITGSFVERPVTTGPPLLESETTRPSGGVTVTSGQSARVTETVGASAGVTGTTGPSTEGSGATGPSVVGSGTTRPLAGESGTTESSAGVTGTRPSSSRESATTGPSDEGSGTTGLSAGVTVTSGQSVRKTGTTGAPAGVTETTRPSVVKSGTTGPSVIGTRTTGTSSGGSGATRSSGGETETTGQSAVKSGTTESFTRLTRTSGQSAGMTGTSAQSAGVALTSPFVEGLVTTGSSTVGLETTRPSAVGSGKTGPPVVKAQTTGPSAGVTVTSGQSARMTGASGPSVGVTGTTGPASKGLGTIRPSVVGLETTELSAEGSGTTGPPIVGETTVPSAGVTVTSGYSDRVTGATEPLAGVTGTIKPSVAGSVTTGPSVTGVETTAKTTSGGLSTTISSVGGTGTTGQSPERSGTTGPFTGLTGTSAQSAGVTMTSIQSAGVLVTTGLNVDGLGTTGKALIGSGTTGLSAEATGTIGPSTEGLEKTGPSITGSGTTRPLVTESWTAGTSSGGHSTTSPSVRGTETTGQSAAESVTTGPVTGYTETSGPSAGVTVTPRQSPTVTQTTGSSAAVSGTTVQSLTVSGTTRPSSGQTEITGSSVKESGTTESSAVRSGTTGPTAGVTGTNGPSSAGVTGITGSSPGVTGTTGSSPGVTGTTGSSARSGTSIPSVGKTGTTRTSVEESRTTRPSAGITGTNGLSAEVTGTTGPLAGVTGTTGPSAGVTRTTGLSAGETGTTGLSPGVTRTTRSSAGLTGKTGLSAGVTGKTGLSAEVTGTTRLSAGVTGTTGPSPGVTGTTGTPAGVTGTTELSAGVTGKTGLSSEVTETTGLSYGVKRTIGLSAGSTGTSGQSAGVAGTTTLSAEVTGTTRPSAGVTGTTGLSAEVTEITGISAVVTGTTGPSAGVTETTGSSAGVAGTTRLSAGVTGITGLSAGVTGTTGLSTEVTGTTGPSAGATGTTGLSVGVTGITGLSDVVTETTGSSARSGTGIPSVGETRTTSTSVEESRTTRPSAGIMGTNGLPAEVTGTTEPLAGGTGTTGILAGVTGTTGLSAGETGKIGSSAGVTGKTGSSARVTGKTGPSAEVTGKTGLSAGVTGTTGLSPGVTGTSGLSAEVTGTTGPSAEATGLPGVSAGVTGTTGSLAGGTGTIGLSAGVTGTTGSSAGVTGTTGLSAGVTGIAGLSAGVTGITGPSAGVTGTTTVSAGVTGTTGLSAEATEITGLSAGVTGTTGLSAGVTETIRLSAGVTGTIRSSAGVTGITGLSAGVTGTTGPSAGVTGSTGLLAGVTETTGQSAKVTGTTGQSVGVTGTTRSSGGVTGITGLSAGVTGTNGLSAVTGMTGLSAEVTGTTGLSVGVTGIAGLSAGVTGITGPSAGITGTTTISAGVTGTSGLSAEATGITGLSAGVTGKTGLSAGVTETIGLSAEATGTIGSSPGVTGTTGSSTGVTGITGLSAGVTGTTGLSTEVTGTTGPSAGVTRTTGLSAGVTGITGLSAIVTETTGSSARSGTSIPSVGETGTTRTSVEESRTTRPSAGITGTNGLSAEVTGTIGPLAGGTGTTGLSAGVTGTVGSSAVVTGTTGLSAGVTGTTGPSAEETGATGPSAEVTETTGPSAGVTGTGRLSAEVTGTTGPSAEVTGLPGESAEVTGTIGSPAGVTGTTQLSAVVTGITGLSAEVTGTTGLSAGVTGITGLSAEVTRTTGLSAGVTGTIGLSAGVTGTTRPSAGVTGTTGQSAEVTGTTEPSAGLTETTGSSTGVTGATGPLAGVTGTTGISTEVTGTTGPSARVTGTTVLSAGVTGITGLSAIVTETTGSSARSGTSTPSVGETGTTRTSVEESRATRPSAGITGTNGQSAEVTWITGPLAGVTGTTGISAGVTGTTGLSAGVTGTIGSSAVVTGINGLSAGVTGTTGPSAEETGATGPSAEVTGTTGPSAEETGATGPSAEVTGTTGPSGGVTGTNGLSAEVTGTTGPSAEVTGLPGVSAGVTGTIGSPAAVTGTIRPSAVVTGITGLSAEVTGTTGLSAWVTGIAGLSAGVTETIGSSAGVTGTNGLSAEATGTTGPSAGVTGTTGLSAGVTGTAGLSARVTESTGLSAGVTGTTGLSAGVTGTTGPSAGITGTNGLSAEVTGTTGPLAGVTGTIGLSAGVTGIAGLSAGVTESTGLSAGVTGTIRSSAVVTGINGLSAGVTGTTGPSAEETGATGPSAEVTGTTGPSGGVTGTSGISAEVTGTTGPSAEVTGLPGVSAGVTGTIGSPAAVTGTTRPSAVVTGISGLSAEVTGTTGLSAGVTETIGSSAGVTGTNGLSAEATETTGPSAGVTGTTGLSAGVTGTTGPSAGIAGTNGLSAGVTGTTGLSARVTESTGLSAGVTGTIGSSAVVTETTRLSSGVTGTIGPSAEETGATGLSAEVTGTTGSLAEVTGTTGLSAGVTGTIGSSAVVTGTTGLSAGITGTNGLSAEVTGTAGPLAGVTGTTGLSAGVTGTTGLSAGVTETTGQSAGVTESTGLSPGVTGTIGSSAVVTGIKGLSAGVTGTTGPSAEETGATGPSAEVTGTTGPSGGVTGTSVLSVEVTGTTGPSAEVTGLPGVSAGLTGTIGSPAAVRGTTWPSAVVTGISGLSGEVTGTTGLSAGVTGIGGLSAGVTGTIGSSAGVTGTNALSAEATGTTGPSAGVTGTTGLSAGVTGTTGLSAGVTGTIRSSAVVTETTGLSAGVTGTTGPSAGIAGTNGLSAEVTGTTGLSAGMTGTTGLSARVTESTGLSAGVTGTIGSSAVVTETTRLSAGVTGTIGPSAEETGATGLSAEVTRTTGSLAGVTGTTGPSAVVTGKTELSAEVTGTTELSAEVTEKTGPSAEVTGKTGLSAGVMETTGPSAEVTGTTGSSAGVTGTTGPSAGVTGTTGPSAEATGLPGVSAGVTGTIGSPAGVTGTARLSAVVTGISGLSAEVTGTTGLSTGVTGIAGHSAAVTGITRPSAGVTGTTTVSAGVTGTIGLSAEATGITLPSAGVTETTGLSAGVTETIGLSAGVTGTIGSSAGVTEITGLSAGVTGTTGPSAGVTGSTVLSAGVTATTGQSVGVTGTTGPSAGVTGTTGLSAGVTGIAGLSAGVTGITGPSAGVTGTTTVSAGVTGTTGLSAEATEITGLSAGVTGTTGLSAGVTGIAGLSAGVTETIGSSAGVTGTNGLSAEATGKTGPSAGVTGTTGLSAGVTGTTGLSAGVTETIGLSAGVTGTIGSSAGVKGTTGQSAEVTGATGQSVGVTGTTRSSGGVTGITGLSAGLRGTTVSSAKAGTSIPLTGKTGTTRTSVEESTTTGPSAGITGTNGLSAEMTGTNELSAGVTGTIGSSAGVTGTTGLSVEATVTTGLSAGVTGTTVPLAGVTWTPGPSAGVTGIAALSAGVTGKSGLSAGVTGKTGLSAGVTGTTGPSAEATGKTGLSAGVTGITGPFAEVTGTTGLSAGVIGTTGSSAEVTGITGLSAGVTGKTRSSAGVTGTTGLSAKSGTSIPSAGKTGTTKTSVEESRTTRPSAGITATTGVPAATSPGAEGESIASTSVATGAIPRSTIAPGSTTTGTTGVTTGTTLAPRSFNIGTSGGISGKTLKPGSYVSEATTATGTPGAGPSGGTTISSPEVSTISEVSNTGITGVGSETSIETGISNTATTGVAPGTTLAPGSSSTEATTSIGGSASTRGGIATEATGSTRGVRTTGSEAPEGTSGEFSGTTISSGGFHTEATTLTGGRGSIGTESRAESTTSLPQSAKTRGGILTEATSSTGRIRATGSEAPGGTSRKFSGTTISSGGSHTEATTLAGGRDSTESEFRTATIGVVPATTVAPGSSKTEATTFLGVSGTTSVGRATGATTSIAGSDTSQAEHPGGTSGEFPGTTITSGDSHTEATALTGSRGSIGTESTVETTTYIGESGTTRGGLATATTGAFSGKTLEPGNDNTEATGSTGGIRATRTEAPGGTSGEFPGTTFTSGGSHTEATTFTGGKGSTGTESRAATTRAAPGTTLVPGSSNTGATASPGGSATTRGRITTATTGAFSGKTLESENDNTEATSSTRGVRTTRSEAPGGTSGEFPGTRITSGGSYTATTRAAPGTTLAPGSSNTGATASLGGSAMTRGRITTATTGAFSGKTLEPGNNNTEATSSTRGVRTTRSEAPGEATTLTGDRSSTGSESRTATTGVAPGTTVAPGSSKTEATTFLGVSGTTNIGRATGATTSIVGSDTSQAERPGGTTVVSPGASSTSQSSRPGTSVTPDSSASESETVTTKEFSGTTAISRTSHTGTPAASGGQATGSLTATTGVAPGTTVAPGSSNTEATTSVGERETTKAEIITGDTGELSGTTIISENSTTAGITAATGKQAGTSEVAPSTTVAPGSFSTAATTSPGASGTTGVTTTTKTTTSLGGSGTTGAEIKSATTGAPGSRTGTAGVPSATTVSPGSSNSEATTSVGESGKTGAETITEATTSTEGTGTSGTGFKTGTSEVAPATTVAPGSFSTAATTSPGASGMTGVTTTTKTTTSLGGSGTTGAKIKLVGTTTTAPESRTAGVPSGTRVTPGSSNSEATTSVEESRITRAEVITEATTFSGGSGATRAGLPRGTTGEFSGTNFISGSSNTEATTSTEGTGTSGTGFKIAGITSAPGKQAGTSGVSLATTVAPGSFSTATTSSGASGITRAGPTSETTTSLGGSGTTGAEIKSAAVPSGTTVAPGSSNSEATTSVGENGKTRGEIITDTTEGTSGKVLEPGSAHTEATTFPGGSGTTRAGPPGGTTGELSRMTIIPGSSNTEATTSTKGTGTSGTGFKTGTSWVAPGTTVSPGSFSTATISPGASRTTGAAPAAETTTSLEGGGTTGAEIKSGATSGVPGSKTGTAGVPSATTIAPGSSNSEATTSLGESGKTRVETITGTTEGKTLAAGSAHTEATTFSGGSGSTRAGPLGGASGTSGGYVPGRETEPTTSIEETGTSRTIFKTVGITSAPGRQAGTSVVAPSTTVAPGSFSTAATTSPGASGMTGVRTTSKTTTSLGGTGTTRTEIKSGATTGAPGIKTDIMGESSRTTILSGSSNTEATNSIEETGTSGTGFKTAGITAAPGKQAGTSGVAPGTTVAPGSFSTAATTSPGASGVTGTGPTAETTTFLGGSSTTGAEIKSGATTGAPGSKTGTAKVLSGTTVASGSSNSEATTFSGITEAVTVPSKNGSMTTALGSQLSSSQTVIPGSSGTISHTTVAPGSSVTGTTTGASDDQVTGSKTGTTGVALSTTVAPGSSSTEATTSTGVHRTTVVGQKTGATTRGSAKQGTRSTIEATTSFRGTGTTGSGMNTGTTGVVSGNTISPSSFNTEATSGTSERPNPGSEIGTTGIVSGTTVAPGSSNTEATTSLGNGGTTEAGSKIVTTGITTGTTIVPGSFNTKATTSTDVGVATGVGMATGITNIISGRSQPTGSKTGYTVTGSGTTALPGGFRTGNTPGSTGVTSSQEGTTVVSSGITGIPETSISGPSKEASDKTTAPGPPTTVTASTGVKETSETGVQTGSTLVTAGVPTRPQVSQPETTVVATREVETENKTECLASLPPAPVCHGPLGEEKSPGDIWTANCHRGTCTDAKTIDCKPEECPSPPTCKTGEKLVKFQSNDTCCEIGYCEPRTCLFNNTDYEIGASFDDPSNPCVSYSCKDTGFAAVVQDCPKQTWCAEANRIYDSKKCCYTCKNNCRSSLVNVTVIYSGCKKRVQMAKCTGECEKTAKYNYDILLLEHSCLCCREENYELRDIVLDCPDGSTIPYQYKHITTCSCLDICQLYTTFMYS</sequence>
<feature type="signal peptide" evidence="1">
    <location>
        <begin position="1"/>
        <end position="21"/>
    </location>
</feature>
<feature type="chain" id="PRO_0000342664" description="Mucin-19">
    <location>
        <begin position="22"/>
        <end position="8384"/>
    </location>
</feature>
<feature type="domain" description="VWFD 1" evidence="4">
    <location>
        <begin position="478"/>
        <end position="649"/>
    </location>
</feature>
<feature type="domain" description="VWFD 2" evidence="4">
    <location>
        <begin position="815"/>
        <end position="995"/>
    </location>
</feature>
<feature type="domain" description="VWFD 3" evidence="4">
    <location>
        <begin position="1274"/>
        <end position="1447"/>
    </location>
</feature>
<feature type="domain" description="VWFC" evidence="3">
    <location>
        <begin position="8159"/>
        <end position="8225"/>
    </location>
</feature>
<feature type="domain" description="CTCK" evidence="2">
    <location>
        <begin position="8288"/>
        <end position="8376"/>
    </location>
</feature>
<feature type="region of interest" description="Disordered" evidence="5">
    <location>
        <begin position="33"/>
        <end position="197"/>
    </location>
</feature>
<feature type="region of interest" description="Disordered" evidence="5">
    <location>
        <begin position="222"/>
        <end position="247"/>
    </location>
</feature>
<feature type="region of interest" description="Disordered" evidence="5">
    <location>
        <begin position="279"/>
        <end position="305"/>
    </location>
</feature>
<feature type="region of interest" description="Disordered" evidence="5">
    <location>
        <begin position="332"/>
        <end position="467"/>
    </location>
</feature>
<feature type="region of interest" description="Disordered" evidence="5">
    <location>
        <begin position="1680"/>
        <end position="1699"/>
    </location>
</feature>
<feature type="region of interest" description="Disordered" evidence="5">
    <location>
        <begin position="1732"/>
        <end position="2464"/>
    </location>
</feature>
<feature type="region of interest" description="Approximate repeats of G-V-T-G-T-T-G-P-S-A" evidence="10">
    <location>
        <begin position="2238"/>
        <end position="6086"/>
    </location>
</feature>
<feature type="region of interest" description="Disordered" evidence="5">
    <location>
        <begin position="2484"/>
        <end position="2526"/>
    </location>
</feature>
<feature type="region of interest" description="Disordered" evidence="5">
    <location>
        <begin position="2540"/>
        <end position="2827"/>
    </location>
</feature>
<feature type="region of interest" description="Disordered" evidence="5">
    <location>
        <begin position="2850"/>
        <end position="2917"/>
    </location>
</feature>
<feature type="region of interest" description="Disordered" evidence="5">
    <location>
        <begin position="2984"/>
        <end position="3027"/>
    </location>
</feature>
<feature type="region of interest" description="Disordered" evidence="5">
    <location>
        <begin position="3075"/>
        <end position="3368"/>
    </location>
</feature>
<feature type="region of interest" description="Disordered" evidence="5">
    <location>
        <begin position="3386"/>
        <end position="3428"/>
    </location>
</feature>
<feature type="region of interest" description="Disordered" evidence="5">
    <location>
        <begin position="3585"/>
        <end position="3628"/>
    </location>
</feature>
<feature type="region of interest" description="Disordered" evidence="5">
    <location>
        <begin position="3667"/>
        <end position="3736"/>
    </location>
</feature>
<feature type="region of interest" description="Disordered" evidence="5">
    <location>
        <begin position="4105"/>
        <end position="4147"/>
    </location>
</feature>
<feature type="region of interest" description="Disordered" evidence="5">
    <location>
        <begin position="4187"/>
        <end position="4251"/>
    </location>
</feature>
<feature type="region of interest" description="Disordered" evidence="5">
    <location>
        <begin position="4315"/>
        <end position="4390"/>
    </location>
</feature>
<feature type="region of interest" description="Disordered" evidence="5">
    <location>
        <begin position="4414"/>
        <end position="4455"/>
    </location>
</feature>
<feature type="region of interest" description="Disordered" evidence="5">
    <location>
        <begin position="4510"/>
        <end position="4583"/>
    </location>
</feature>
<feature type="region of interest" description="Disordered" evidence="5">
    <location>
        <begin position="4790"/>
        <end position="4843"/>
    </location>
</feature>
<feature type="region of interest" description="Disordered" evidence="5">
    <location>
        <begin position="4895"/>
        <end position="4930"/>
    </location>
</feature>
<feature type="region of interest" description="Disordered" evidence="5">
    <location>
        <begin position="5130"/>
        <end position="5161"/>
    </location>
</feature>
<feature type="region of interest" description="Disordered" evidence="5">
    <location>
        <begin position="5429"/>
        <end position="5452"/>
    </location>
</feature>
<feature type="region of interest" description="Disordered" evidence="5">
    <location>
        <begin position="5464"/>
        <end position="5494"/>
    </location>
</feature>
<feature type="region of interest" description="Disordered" evidence="5">
    <location>
        <begin position="5880"/>
        <end position="5918"/>
    </location>
</feature>
<feature type="region of interest" description="Disordered" evidence="5">
    <location>
        <begin position="6069"/>
        <end position="6403"/>
    </location>
</feature>
<feature type="region of interest" description="Disordered" evidence="5">
    <location>
        <begin position="6440"/>
        <end position="6918"/>
    </location>
</feature>
<feature type="region of interest" description="Disordered" evidence="5">
    <location>
        <begin position="6953"/>
        <end position="7223"/>
    </location>
</feature>
<feature type="region of interest" description="Disordered" evidence="5">
    <location>
        <begin position="7250"/>
        <end position="7749"/>
    </location>
</feature>
<feature type="region of interest" description="Disordered" evidence="5">
    <location>
        <begin position="7783"/>
        <end position="7975"/>
    </location>
</feature>
<feature type="region of interest" description="Disordered" evidence="5">
    <location>
        <begin position="8020"/>
        <end position="8133"/>
    </location>
</feature>
<feature type="compositionally biased region" description="Low complexity" evidence="5">
    <location>
        <begin position="35"/>
        <end position="48"/>
    </location>
</feature>
<feature type="compositionally biased region" description="Low complexity" evidence="5">
    <location>
        <begin position="88"/>
        <end position="98"/>
    </location>
</feature>
<feature type="compositionally biased region" description="Basic and acidic residues" evidence="5">
    <location>
        <begin position="169"/>
        <end position="184"/>
    </location>
</feature>
<feature type="compositionally biased region" description="Polar residues" evidence="5">
    <location>
        <begin position="187"/>
        <end position="197"/>
    </location>
</feature>
<feature type="compositionally biased region" description="Polar residues" evidence="5">
    <location>
        <begin position="279"/>
        <end position="299"/>
    </location>
</feature>
<feature type="compositionally biased region" description="Low complexity" evidence="5">
    <location>
        <begin position="359"/>
        <end position="369"/>
    </location>
</feature>
<feature type="compositionally biased region" description="Polar residues" evidence="5">
    <location>
        <begin position="370"/>
        <end position="381"/>
    </location>
</feature>
<feature type="compositionally biased region" description="Low complexity" evidence="5">
    <location>
        <begin position="424"/>
        <end position="435"/>
    </location>
</feature>
<feature type="compositionally biased region" description="Low complexity" evidence="5">
    <location>
        <begin position="443"/>
        <end position="452"/>
    </location>
</feature>
<feature type="compositionally biased region" description="Low complexity" evidence="5">
    <location>
        <begin position="1732"/>
        <end position="1746"/>
    </location>
</feature>
<feature type="compositionally biased region" description="Low complexity" evidence="5">
    <location>
        <begin position="1772"/>
        <end position="1813"/>
    </location>
</feature>
<feature type="compositionally biased region" description="Low complexity" evidence="5">
    <location>
        <begin position="1820"/>
        <end position="1833"/>
    </location>
</feature>
<feature type="compositionally biased region" description="Polar residues" evidence="5">
    <location>
        <begin position="1835"/>
        <end position="1860"/>
    </location>
</feature>
<feature type="compositionally biased region" description="Low complexity" evidence="5">
    <location>
        <begin position="1868"/>
        <end position="1879"/>
    </location>
</feature>
<feature type="compositionally biased region" description="Polar residues" evidence="5">
    <location>
        <begin position="1880"/>
        <end position="1905"/>
    </location>
</feature>
<feature type="compositionally biased region" description="Low complexity" evidence="5">
    <location>
        <begin position="1909"/>
        <end position="1921"/>
    </location>
</feature>
<feature type="compositionally biased region" description="Polar residues" evidence="5">
    <location>
        <begin position="1950"/>
        <end position="1968"/>
    </location>
</feature>
<feature type="compositionally biased region" description="Low complexity" evidence="5">
    <location>
        <begin position="1969"/>
        <end position="1983"/>
    </location>
</feature>
<feature type="compositionally biased region" description="Low complexity" evidence="5">
    <location>
        <begin position="2013"/>
        <end position="2049"/>
    </location>
</feature>
<feature type="compositionally biased region" description="Polar residues" evidence="5">
    <location>
        <begin position="2055"/>
        <end position="2100"/>
    </location>
</feature>
<feature type="compositionally biased region" description="Low complexity" evidence="5">
    <location>
        <begin position="2132"/>
        <end position="2147"/>
    </location>
</feature>
<feature type="compositionally biased region" description="Low complexity" evidence="5">
    <location>
        <begin position="2159"/>
        <end position="2170"/>
    </location>
</feature>
<feature type="compositionally biased region" description="Polar residues" evidence="5">
    <location>
        <begin position="2171"/>
        <end position="2186"/>
    </location>
</feature>
<feature type="compositionally biased region" description="Polar residues" evidence="5">
    <location>
        <begin position="2209"/>
        <end position="2225"/>
    </location>
</feature>
<feature type="compositionally biased region" description="Low complexity" evidence="5">
    <location>
        <begin position="2233"/>
        <end position="2246"/>
    </location>
</feature>
<feature type="compositionally biased region" description="Low complexity" evidence="5">
    <location>
        <begin position="2280"/>
        <end position="2313"/>
    </location>
</feature>
<feature type="compositionally biased region" description="Polar residues" evidence="5">
    <location>
        <begin position="2316"/>
        <end position="2332"/>
    </location>
</feature>
<feature type="compositionally biased region" description="Polar residues" evidence="5">
    <location>
        <begin position="2354"/>
        <end position="2372"/>
    </location>
</feature>
<feature type="compositionally biased region" description="Gly residues" evidence="5">
    <location>
        <begin position="2403"/>
        <end position="2419"/>
    </location>
</feature>
<feature type="compositionally biased region" description="Low complexity" evidence="5">
    <location>
        <begin position="2420"/>
        <end position="2441"/>
    </location>
</feature>
<feature type="compositionally biased region" description="Polar residues" evidence="5">
    <location>
        <begin position="2442"/>
        <end position="2460"/>
    </location>
</feature>
<feature type="compositionally biased region" description="Low complexity" evidence="5">
    <location>
        <begin position="2512"/>
        <end position="2526"/>
    </location>
</feature>
<feature type="compositionally biased region" description="Low complexity" evidence="5">
    <location>
        <begin position="2545"/>
        <end position="2571"/>
    </location>
</feature>
<feature type="compositionally biased region" description="Low complexity" evidence="5">
    <location>
        <begin position="2578"/>
        <end position="2589"/>
    </location>
</feature>
<feature type="compositionally biased region" description="Polar residues" evidence="5">
    <location>
        <begin position="2595"/>
        <end position="2610"/>
    </location>
</feature>
<feature type="compositionally biased region" description="Polar residues" evidence="5">
    <location>
        <begin position="2638"/>
        <end position="2653"/>
    </location>
</feature>
<feature type="compositionally biased region" description="Low complexity" evidence="5">
    <location>
        <begin position="2654"/>
        <end position="2681"/>
    </location>
</feature>
<feature type="compositionally biased region" description="Polar residues" evidence="5">
    <location>
        <begin position="2695"/>
        <end position="2748"/>
    </location>
</feature>
<feature type="compositionally biased region" description="Polar residues" evidence="5">
    <location>
        <begin position="2755"/>
        <end position="2770"/>
    </location>
</feature>
<feature type="compositionally biased region" description="Low complexity" evidence="5">
    <location>
        <begin position="2787"/>
        <end position="2799"/>
    </location>
</feature>
<feature type="compositionally biased region" description="Polar residues" evidence="5">
    <location>
        <begin position="2800"/>
        <end position="2827"/>
    </location>
</feature>
<feature type="compositionally biased region" description="Polar residues" evidence="5">
    <location>
        <begin position="2850"/>
        <end position="2859"/>
    </location>
</feature>
<feature type="compositionally biased region" description="Polar residues" evidence="5">
    <location>
        <begin position="2874"/>
        <end position="2892"/>
    </location>
</feature>
<feature type="compositionally biased region" description="Low complexity" evidence="5">
    <location>
        <begin position="2894"/>
        <end position="2910"/>
    </location>
</feature>
<feature type="compositionally biased region" description="Polar residues" evidence="5">
    <location>
        <begin position="2984"/>
        <end position="2998"/>
    </location>
</feature>
<feature type="compositionally biased region" description="Low complexity" evidence="5">
    <location>
        <begin position="2999"/>
        <end position="3027"/>
    </location>
</feature>
<feature type="compositionally biased region" description="Polar residues" evidence="5">
    <location>
        <begin position="3099"/>
        <end position="3109"/>
    </location>
</feature>
<feature type="compositionally biased region" description="Low complexity" evidence="5">
    <location>
        <begin position="3114"/>
        <end position="3130"/>
    </location>
</feature>
<feature type="compositionally biased region" description="Polar residues" evidence="5">
    <location>
        <begin position="3131"/>
        <end position="3159"/>
    </location>
</feature>
<feature type="compositionally biased region" description="Low complexity" evidence="5">
    <location>
        <begin position="3172"/>
        <end position="3188"/>
    </location>
</feature>
<feature type="compositionally biased region" description="Polar residues" evidence="5">
    <location>
        <begin position="3189"/>
        <end position="3224"/>
    </location>
</feature>
<feature type="compositionally biased region" description="Low complexity" evidence="5">
    <location>
        <begin position="3225"/>
        <end position="3277"/>
    </location>
</feature>
<feature type="compositionally biased region" description="Polar residues" evidence="5">
    <location>
        <begin position="3303"/>
        <end position="3317"/>
    </location>
</feature>
<feature type="compositionally biased region" description="Polar residues" evidence="5">
    <location>
        <begin position="3324"/>
        <end position="3362"/>
    </location>
</feature>
<feature type="compositionally biased region" description="Low complexity" evidence="5">
    <location>
        <begin position="3390"/>
        <end position="3417"/>
    </location>
</feature>
<feature type="compositionally biased region" description="Polar residues" evidence="5">
    <location>
        <begin position="3702"/>
        <end position="3728"/>
    </location>
</feature>
<feature type="compositionally biased region" description="Polar residues" evidence="5">
    <location>
        <begin position="4105"/>
        <end position="4116"/>
    </location>
</feature>
<feature type="compositionally biased region" description="Low complexity" evidence="5">
    <location>
        <begin position="4117"/>
        <end position="4126"/>
    </location>
</feature>
<feature type="compositionally biased region" description="Polar residues" evidence="5">
    <location>
        <begin position="4320"/>
        <end position="4346"/>
    </location>
</feature>
<feature type="compositionally biased region" description="Low complexity" evidence="5">
    <location>
        <begin position="4347"/>
        <end position="4385"/>
    </location>
</feature>
<feature type="compositionally biased region" description="Low complexity" evidence="5">
    <location>
        <begin position="4414"/>
        <end position="4426"/>
    </location>
</feature>
<feature type="compositionally biased region" description="Low complexity" evidence="5">
    <location>
        <begin position="5469"/>
        <end position="5494"/>
    </location>
</feature>
<feature type="compositionally biased region" description="Low complexity" evidence="5">
    <location>
        <begin position="5889"/>
        <end position="5903"/>
    </location>
</feature>
<feature type="compositionally biased region" description="Polar residues" evidence="5">
    <location>
        <begin position="5908"/>
        <end position="5918"/>
    </location>
</feature>
<feature type="compositionally biased region" description="Polar residues" evidence="5">
    <location>
        <begin position="6071"/>
        <end position="6103"/>
    </location>
</feature>
<feature type="compositionally biased region" description="Polar residues" evidence="5">
    <location>
        <begin position="6111"/>
        <end position="6121"/>
    </location>
</feature>
<feature type="compositionally biased region" description="Low complexity" evidence="5">
    <location>
        <begin position="6156"/>
        <end position="6168"/>
    </location>
</feature>
<feature type="compositionally biased region" description="Polar residues" evidence="5">
    <location>
        <begin position="6217"/>
        <end position="6248"/>
    </location>
</feature>
<feature type="compositionally biased region" description="Polar residues" evidence="5">
    <location>
        <begin position="6257"/>
        <end position="6275"/>
    </location>
</feature>
<feature type="compositionally biased region" description="Low complexity" evidence="5">
    <location>
        <begin position="6284"/>
        <end position="6295"/>
    </location>
</feature>
<feature type="compositionally biased region" description="Polar residues" evidence="5">
    <location>
        <begin position="6303"/>
        <end position="6323"/>
    </location>
</feature>
<feature type="compositionally biased region" description="Polar residues" evidence="5">
    <location>
        <begin position="6336"/>
        <end position="6346"/>
    </location>
</feature>
<feature type="compositionally biased region" description="Low complexity" evidence="5">
    <location>
        <begin position="6378"/>
        <end position="6389"/>
    </location>
</feature>
<feature type="compositionally biased region" description="Polar residues" evidence="5">
    <location>
        <begin position="6440"/>
        <end position="6457"/>
    </location>
</feature>
<feature type="compositionally biased region" description="Polar residues" evidence="5">
    <location>
        <begin position="6470"/>
        <end position="6503"/>
    </location>
</feature>
<feature type="compositionally biased region" description="Low complexity" evidence="5">
    <location>
        <begin position="6507"/>
        <end position="6523"/>
    </location>
</feature>
<feature type="compositionally biased region" description="Polar residues" evidence="5">
    <location>
        <begin position="6560"/>
        <end position="6571"/>
    </location>
</feature>
<feature type="compositionally biased region" description="Low complexity" evidence="5">
    <location>
        <begin position="6581"/>
        <end position="6597"/>
    </location>
</feature>
<feature type="compositionally biased region" description="Polar residues" evidence="5">
    <location>
        <begin position="6599"/>
        <end position="6608"/>
    </location>
</feature>
<feature type="compositionally biased region" description="Low complexity" evidence="5">
    <location>
        <begin position="6612"/>
        <end position="6628"/>
    </location>
</feature>
<feature type="compositionally biased region" description="Polar residues" evidence="5">
    <location>
        <begin position="6669"/>
        <end position="6680"/>
    </location>
</feature>
<feature type="compositionally biased region" description="Polar residues" evidence="5">
    <location>
        <begin position="6689"/>
        <end position="6698"/>
    </location>
</feature>
<feature type="compositionally biased region" description="Low complexity" evidence="5">
    <location>
        <begin position="6707"/>
        <end position="6718"/>
    </location>
</feature>
<feature type="compositionally biased region" description="Polar residues" evidence="5">
    <location>
        <begin position="6752"/>
        <end position="6766"/>
    </location>
</feature>
<feature type="compositionally biased region" description="Low complexity" evidence="5">
    <location>
        <begin position="6767"/>
        <end position="6781"/>
    </location>
</feature>
<feature type="compositionally biased region" description="Polar residues" evidence="5">
    <location>
        <begin position="6794"/>
        <end position="6817"/>
    </location>
</feature>
<feature type="compositionally biased region" description="Low complexity" evidence="5">
    <location>
        <begin position="6827"/>
        <end position="6842"/>
    </location>
</feature>
<feature type="compositionally biased region" description="Polar residues" evidence="5">
    <location>
        <begin position="6843"/>
        <end position="6875"/>
    </location>
</feature>
<feature type="compositionally biased region" description="Low complexity" evidence="5">
    <location>
        <begin position="6887"/>
        <end position="6901"/>
    </location>
</feature>
<feature type="compositionally biased region" description="Polar residues" evidence="5">
    <location>
        <begin position="6902"/>
        <end position="6911"/>
    </location>
</feature>
<feature type="compositionally biased region" description="Polar residues" evidence="5">
    <location>
        <begin position="6953"/>
        <end position="6964"/>
    </location>
</feature>
<feature type="compositionally biased region" description="Low complexity" evidence="5">
    <location>
        <begin position="6966"/>
        <end position="6994"/>
    </location>
</feature>
<feature type="compositionally biased region" description="Polar residues" evidence="5">
    <location>
        <begin position="7006"/>
        <end position="7041"/>
    </location>
</feature>
<feature type="compositionally biased region" description="Low complexity" evidence="5">
    <location>
        <begin position="7045"/>
        <end position="7074"/>
    </location>
</feature>
<feature type="compositionally biased region" description="Polar residues" evidence="5">
    <location>
        <begin position="7085"/>
        <end position="7094"/>
    </location>
</feature>
<feature type="compositionally biased region" description="Low complexity" evidence="5">
    <location>
        <begin position="7095"/>
        <end position="7112"/>
    </location>
</feature>
<feature type="compositionally biased region" description="Polar residues" evidence="5">
    <location>
        <begin position="7143"/>
        <end position="7158"/>
    </location>
</feature>
<feature type="compositionally biased region" description="Low complexity" evidence="5">
    <location>
        <begin position="7201"/>
        <end position="7215"/>
    </location>
</feature>
<feature type="compositionally biased region" description="Low complexity" evidence="5">
    <location>
        <begin position="7250"/>
        <end position="7276"/>
    </location>
</feature>
<feature type="compositionally biased region" description="Polar residues" evidence="5">
    <location>
        <begin position="7293"/>
        <end position="7311"/>
    </location>
</feature>
<feature type="compositionally biased region" description="Low complexity" evidence="5">
    <location>
        <begin position="7379"/>
        <end position="7397"/>
    </location>
</feature>
<feature type="compositionally biased region" description="Polar residues" evidence="5">
    <location>
        <begin position="7403"/>
        <end position="7421"/>
    </location>
</feature>
<feature type="compositionally biased region" description="Low complexity" evidence="5">
    <location>
        <begin position="7422"/>
        <end position="7435"/>
    </location>
</feature>
<feature type="compositionally biased region" description="Polar residues" evidence="5">
    <location>
        <begin position="7465"/>
        <end position="7483"/>
    </location>
</feature>
<feature type="compositionally biased region" description="Gly residues" evidence="5">
    <location>
        <begin position="7525"/>
        <end position="7537"/>
    </location>
</feature>
<feature type="compositionally biased region" description="Polar residues" evidence="5">
    <location>
        <begin position="7544"/>
        <end position="7557"/>
    </location>
</feature>
<feature type="compositionally biased region" description="Polar residues" evidence="5">
    <location>
        <begin position="7571"/>
        <end position="7596"/>
    </location>
</feature>
<feature type="compositionally biased region" description="Low complexity" evidence="5">
    <location>
        <begin position="7600"/>
        <end position="7613"/>
    </location>
</feature>
<feature type="compositionally biased region" description="Polar residues" evidence="5">
    <location>
        <begin position="7642"/>
        <end position="7669"/>
    </location>
</feature>
<feature type="compositionally biased region" description="Polar residues" evidence="5">
    <location>
        <begin position="7698"/>
        <end position="7708"/>
    </location>
</feature>
<feature type="compositionally biased region" description="Low complexity" evidence="5">
    <location>
        <begin position="7715"/>
        <end position="7732"/>
    </location>
</feature>
<feature type="compositionally biased region" description="Polar residues" evidence="5">
    <location>
        <begin position="7783"/>
        <end position="7811"/>
    </location>
</feature>
<feature type="compositionally biased region" description="Low complexity" evidence="5">
    <location>
        <begin position="7812"/>
        <end position="7828"/>
    </location>
</feature>
<feature type="compositionally biased region" description="Polar residues" evidence="5">
    <location>
        <begin position="7830"/>
        <end position="7851"/>
    </location>
</feature>
<feature type="compositionally biased region" description="Low complexity" evidence="5">
    <location>
        <begin position="7852"/>
        <end position="7861"/>
    </location>
</feature>
<feature type="compositionally biased region" description="Polar residues" evidence="5">
    <location>
        <begin position="7862"/>
        <end position="7891"/>
    </location>
</feature>
<feature type="compositionally biased region" description="Low complexity" evidence="5">
    <location>
        <begin position="7892"/>
        <end position="7917"/>
    </location>
</feature>
<feature type="compositionally biased region" description="Polar residues" evidence="5">
    <location>
        <begin position="7918"/>
        <end position="7934"/>
    </location>
</feature>
<feature type="compositionally biased region" description="Low complexity" evidence="5">
    <location>
        <begin position="7938"/>
        <end position="7952"/>
    </location>
</feature>
<feature type="compositionally biased region" description="Polar residues" evidence="5">
    <location>
        <begin position="7953"/>
        <end position="7965"/>
    </location>
</feature>
<feature type="compositionally biased region" description="Polar residues" evidence="5">
    <location>
        <begin position="8020"/>
        <end position="8040"/>
    </location>
</feature>
<feature type="compositionally biased region" description="Polar residues" evidence="5">
    <location>
        <begin position="8048"/>
        <end position="8081"/>
    </location>
</feature>
<feature type="compositionally biased region" description="Polar residues" evidence="5">
    <location>
        <begin position="8110"/>
        <end position="8120"/>
    </location>
</feature>
<feature type="disulfide bond" evidence="4">
    <location>
        <begin position="502"/>
        <end position="648"/>
    </location>
</feature>
<feature type="disulfide bond" evidence="4">
    <location>
        <begin position="817"/>
        <end position="952"/>
    </location>
</feature>
<feature type="disulfide bond" evidence="4">
    <location>
        <begin position="838"/>
        <end position="994"/>
    </location>
</feature>
<feature type="disulfide bond" evidence="4">
    <location>
        <begin position="857"/>
        <end position="865"/>
    </location>
</feature>
<feature type="disulfide bond" evidence="4">
    <location>
        <begin position="1276"/>
        <end position="1411"/>
    </location>
</feature>
<feature type="disulfide bond" evidence="4">
    <location>
        <begin position="1298"/>
        <end position="1446"/>
    </location>
</feature>
<feature type="disulfide bond" evidence="4">
    <location>
        <begin position="1307"/>
        <end position="1408"/>
    </location>
</feature>
<feature type="disulfide bond" evidence="4">
    <location>
        <begin position="1323"/>
        <end position="1330"/>
    </location>
</feature>
<feature type="disulfide bond" evidence="2">
    <location>
        <begin position="8288"/>
        <end position="8339"/>
    </location>
</feature>
<feature type="disulfide bond" evidence="2">
    <location>
        <begin position="8306"/>
        <end position="8353"/>
    </location>
</feature>
<feature type="disulfide bond" evidence="2">
    <location>
        <begin position="8315"/>
        <end position="8369"/>
    </location>
</feature>
<feature type="disulfide bond" evidence="2">
    <location>
        <begin position="8319"/>
        <end position="8371"/>
    </location>
</feature>
<feature type="splice variant" id="VSP_034521" description="In isoform 2." evidence="9">
    <original>GNTPGSTGVTSSQEGTTV</original>
    <variation>DSPSFPLFLICSYRGHNF</variation>
    <location>
        <begin position="8049"/>
        <end position="8066"/>
    </location>
</feature>
<feature type="splice variant" id="VSP_034522" description="In isoform 2." evidence="9">
    <location>
        <begin position="8067"/>
        <end position="8384"/>
    </location>
</feature>
<feature type="sequence variant" id="VAR_056617" description="In dbSNP:rs7955308.">
    <original>G</original>
    <variation>E</variation>
    <location>
        <position position="717"/>
    </location>
</feature>
<feature type="sequence variant" id="VAR_056618" description="In dbSNP:rs11564170.">
    <original>T</original>
    <variation>K</variation>
    <location>
        <position position="783"/>
    </location>
</feature>
<feature type="sequence variant" id="VAR_056619" description="In dbSNP:rs7958987.">
    <original>V</original>
    <variation>I</variation>
    <location>
        <position position="790"/>
    </location>
</feature>
<feature type="sequence variant" id="VAR_056620" description="In dbSNP:rs17467284.">
    <original>R</original>
    <variation>L</variation>
    <location>
        <position position="791"/>
    </location>
</feature>
<feature type="sequence variant" id="VAR_056621" description="In dbSNP:rs11564245.">
    <original>D</original>
    <variation>H</variation>
    <location>
        <position position="803"/>
    </location>
</feature>
<feature type="sequence variant" id="VAR_056622" description="In dbSNP:rs10506156.">
    <original>V</original>
    <variation>I</variation>
    <location>
        <position position="843"/>
    </location>
</feature>
<feature type="sequence variant" id="VAR_056623" description="In dbSNP:rs28365246.">
    <original>V</original>
    <variation>I</variation>
    <location>
        <position position="869"/>
    </location>
</feature>
<feature type="sequence variant" id="VAR_056624" description="In dbSNP:rs11564125.">
    <original>V</original>
    <variation>I</variation>
    <location>
        <position position="883"/>
    </location>
</feature>
<feature type="sequence variant" id="VAR_056625" description="In dbSNP:rs12317988.">
    <original>L</original>
    <variation>F</variation>
    <location>
        <position position="1010"/>
    </location>
</feature>
<feature type="sequence variant" id="VAR_056626" description="In dbSNP:rs11176635.">
    <original>I</original>
    <variation>T</variation>
    <location>
        <position position="1151"/>
    </location>
</feature>
<feature type="sequence variant" id="VAR_056627" description="In dbSNP:rs4768261.">
    <original>S</original>
    <variation>F</variation>
    <location>
        <position position="1226"/>
    </location>
</feature>
<feature type="sequence variant" id="VAR_056628" description="In dbSNP:rs7966110.">
    <original>I</original>
    <variation>M</variation>
    <location>
        <position position="1278"/>
    </location>
</feature>
<feature type="sequence variant" id="VAR_056629" description="In dbSNP:rs4768264.">
    <original>G</original>
    <variation>S</variation>
    <location>
        <position position="1296"/>
    </location>
</feature>
<feature type="sequence variant" id="VAR_056630" description="In dbSNP:rs7312154.">
    <original>R</original>
    <variation>H</variation>
    <location>
        <position position="1315"/>
    </location>
</feature>
<feature type="sequence variant" id="VAR_056631" description="In dbSNP:rs12369002.">
    <original>G</original>
    <variation>W</variation>
    <location>
        <position position="1327"/>
    </location>
</feature>
<feature type="sequence variant" id="VAR_056632" description="In dbSNP:rs11564141.">
    <original>A</original>
    <variation>T</variation>
    <location>
        <position position="1367"/>
    </location>
</feature>
<feature type="sequence variant" id="VAR_056633" description="In dbSNP:rs11564109.">
    <original>C</original>
    <variation>Y</variation>
    <location>
        <position position="1411"/>
    </location>
</feature>
<feature type="sequence variant" id="VAR_056634" description="In dbSNP:rs11176666.">
    <original>A</original>
    <variation>T</variation>
    <location>
        <position position="1451"/>
    </location>
</feature>
<feature type="sequence variant" id="VAR_056635" description="In dbSNP:rs10784621.">
    <original>A</original>
    <variation>V</variation>
    <location>
        <position position="1493"/>
    </location>
</feature>
<feature type="sequence variant" id="VAR_056636" description="In dbSNP:rs17128169.">
    <original>N</original>
    <variation>S</variation>
    <location>
        <position position="1621"/>
    </location>
</feature>
<feature type="sequence variant" id="VAR_056637" description="In dbSNP:rs17128233.">
    <original>T</original>
    <variation>A</variation>
    <location>
        <position position="1688"/>
    </location>
</feature>
<feature type="sequence variant" id="VAR_056638" description="In dbSNP:rs2933353.">
    <original>E</original>
    <variation>A</variation>
    <location>
        <position position="1762"/>
    </location>
</feature>
<feature type="sequence variant" id="VAR_056639" description="In dbSNP:rs7956459.">
    <original>S</original>
    <variation>R</variation>
    <location>
        <position position="1770"/>
    </location>
</feature>
<feature type="sequence variant" id="VAR_056640" description="In dbSNP:rs1492333.">
    <original>A</original>
    <variation>S</variation>
    <location>
        <position position="2029"/>
    </location>
</feature>
<feature type="sequence conflict" description="In Ref. 3; AAP41817." evidence="10" ref="3">
    <original>T</original>
    <variation>S</variation>
    <location>
        <position position="8091"/>
    </location>
</feature>
<feature type="sequence conflict" description="In Ref. 3; AAP41817." evidence="10" ref="3">
    <original>Y</original>
    <variation>H</variation>
    <location>
        <position position="8327"/>
    </location>
</feature>
<gene>
    <name type="primary">MUC19</name>
</gene>
<comment type="function">
    <text evidence="8">May function in ocular mucus homeostasis.</text>
</comment>
<comment type="subcellular location">
    <subcellularLocation>
        <location evidence="10">Secreted</location>
    </subcellularLocation>
</comment>
<comment type="alternative products">
    <event type="alternative splicing"/>
    <isoform>
        <id>Q7Z5P9-1</id>
        <name>1</name>
        <sequence type="displayed"/>
    </isoform>
    <isoform>
        <id>Q7Z5P9-2</id>
        <name>2</name>
        <sequence type="described" ref="VSP_034521 VSP_034522"/>
    </isoform>
</comment>
<comment type="tissue specificity">
    <text evidence="6 7 8">Expressed corneal epithelial cells, conjunctival goblet and epithelial cells and lacrimal gland cells (at protein level). Expressed by mucous cells of the submandibular gland and submucosal gland of the trachea. Expressed by middle ear epithelial cells.</text>
</comment>
<comment type="induction">
    <text evidence="8">Down-regulated in Sjoegren syndrome patients (at protein level).</text>
</comment>
<comment type="caution">
    <text evidence="10">According to the Genome Reference Consortium, the reference genome GRCh38/hg38 is in conflict with the sequence shown here.</text>
</comment>
<comment type="sequence caution" evidence="10">
    <conflict type="erroneous initiation">
        <sequence resource="EMBL-CDS" id="BAC04041"/>
    </conflict>
    <text>Truncated N-terminus.</text>
</comment>
<comment type="online information" name="Mucin database">
    <link uri="http://www.medkem.gu.se/mucinbiology/databases/"/>
</comment>
<keyword id="KW-0025">Alternative splicing</keyword>
<keyword id="KW-1015">Disulfide bond</keyword>
<keyword id="KW-1267">Proteomics identification</keyword>
<keyword id="KW-1185">Reference proteome</keyword>
<keyword id="KW-0677">Repeat</keyword>
<keyword id="KW-0964">Secreted</keyword>
<keyword id="KW-0732">Signal</keyword>
<evidence type="ECO:0000255" key="1"/>
<evidence type="ECO:0000255" key="2">
    <source>
        <dbReference type="PROSITE-ProRule" id="PRU00039"/>
    </source>
</evidence>
<evidence type="ECO:0000255" key="3">
    <source>
        <dbReference type="PROSITE-ProRule" id="PRU00220"/>
    </source>
</evidence>
<evidence type="ECO:0000255" key="4">
    <source>
        <dbReference type="PROSITE-ProRule" id="PRU00580"/>
    </source>
</evidence>
<evidence type="ECO:0000256" key="5">
    <source>
        <dbReference type="SAM" id="MobiDB-lite"/>
    </source>
</evidence>
<evidence type="ECO:0000269" key="6">
    <source>
    </source>
</evidence>
<evidence type="ECO:0000269" key="7">
    <source>
    </source>
</evidence>
<evidence type="ECO:0000269" key="8">
    <source>
    </source>
</evidence>
<evidence type="ECO:0000303" key="9">
    <source>
    </source>
</evidence>
<evidence type="ECO:0000305" key="10"/>
<name>MUC19_HUMAN</name>
<organism>
    <name type="scientific">Homo sapiens</name>
    <name type="common">Human</name>
    <dbReference type="NCBI Taxonomy" id="9606"/>
    <lineage>
        <taxon>Eukaryota</taxon>
        <taxon>Metazoa</taxon>
        <taxon>Chordata</taxon>
        <taxon>Craniata</taxon>
        <taxon>Vertebrata</taxon>
        <taxon>Euteleostomi</taxon>
        <taxon>Mammalia</taxon>
        <taxon>Eutheria</taxon>
        <taxon>Euarchontoglires</taxon>
        <taxon>Primates</taxon>
        <taxon>Haplorrhini</taxon>
        <taxon>Catarrhini</taxon>
        <taxon>Hominidae</taxon>
        <taxon>Homo</taxon>
    </lineage>
</organism>
<dbReference type="EMBL" id="HM801842">
    <property type="protein sequence ID" value="AEM63682.1"/>
    <property type="molecule type" value="mRNA"/>
</dbReference>
<dbReference type="EMBL" id="AC024935">
    <property type="status" value="NOT_ANNOTATED_CDS"/>
    <property type="molecule type" value="Genomic_DNA"/>
</dbReference>
<dbReference type="EMBL" id="AC074030">
    <property type="status" value="NOT_ANNOTATED_CDS"/>
    <property type="molecule type" value="Genomic_DNA"/>
</dbReference>
<dbReference type="EMBL" id="AC107023">
    <property type="status" value="NOT_ANNOTATED_CDS"/>
    <property type="molecule type" value="Genomic_DNA"/>
</dbReference>
<dbReference type="EMBL" id="AY236870">
    <property type="protein sequence ID" value="AAP41817.1"/>
    <property type="molecule type" value="mRNA"/>
</dbReference>
<dbReference type="EMBL" id="AK093065">
    <property type="protein sequence ID" value="BAC04041.1"/>
    <property type="status" value="ALT_INIT"/>
    <property type="molecule type" value="mRNA"/>
</dbReference>
<dbReference type="RefSeq" id="NP_775871.2">
    <molecule id="Q7Z5P9-1"/>
    <property type="nucleotide sequence ID" value="NM_173600.2"/>
</dbReference>
<dbReference type="SMR" id="Q7Z5P9"/>
<dbReference type="FunCoup" id="Q7Z5P9">
    <property type="interactions" value="77"/>
</dbReference>
<dbReference type="IntAct" id="Q7Z5P9">
    <property type="interactions" value="3"/>
</dbReference>
<dbReference type="STRING" id="9606.ENSP00000495398"/>
<dbReference type="GlyGen" id="Q7Z5P9">
    <property type="glycosylation" value="26 sites, 1 O-linked glycan (14 sites)"/>
</dbReference>
<dbReference type="iPTMnet" id="Q7Z5P9"/>
<dbReference type="PhosphoSitePlus" id="Q7Z5P9"/>
<dbReference type="BioMuta" id="HGNC:14362"/>
<dbReference type="jPOST" id="Q7Z5P9"/>
<dbReference type="MassIVE" id="Q7Z5P9"/>
<dbReference type="PeptideAtlas" id="Q7Z5P9"/>
<dbReference type="ProteomicsDB" id="69340">
    <molecule id="Q7Z5P9-1"/>
</dbReference>
<dbReference type="ProteomicsDB" id="69341">
    <molecule id="Q7Z5P9-2"/>
</dbReference>
<dbReference type="DNASU" id="283463"/>
<dbReference type="GeneID" id="283463"/>
<dbReference type="KEGG" id="hsa:283463"/>
<dbReference type="AGR" id="HGNC:14362"/>
<dbReference type="CTD" id="283463"/>
<dbReference type="DisGeNET" id="283463"/>
<dbReference type="GeneCards" id="MUC19"/>
<dbReference type="HGNC" id="HGNC:14362">
    <property type="gene designation" value="MUC19"/>
</dbReference>
<dbReference type="MIM" id="612170">
    <property type="type" value="gene"/>
</dbReference>
<dbReference type="neXtProt" id="NX_Q7Z5P9"/>
<dbReference type="InParanoid" id="Q7Z5P9"/>
<dbReference type="OrthoDB" id="6262482at2759"/>
<dbReference type="PAN-GO" id="Q7Z5P9">
    <property type="GO annotations" value="0 GO annotations based on evolutionary models"/>
</dbReference>
<dbReference type="PathwayCommons" id="Q7Z5P9"/>
<dbReference type="Reactome" id="R-HSA-5083625">
    <property type="pathway name" value="Defective GALNT3 causes HFTC"/>
</dbReference>
<dbReference type="Reactome" id="R-HSA-5083632">
    <property type="pathway name" value="Defective C1GALT1C1 causes TNPS"/>
</dbReference>
<dbReference type="Reactome" id="R-HSA-5083636">
    <property type="pathway name" value="Defective GALNT12 causes CRCS1"/>
</dbReference>
<dbReference type="Reactome" id="R-HSA-5621480">
    <property type="pathway name" value="Dectin-2 family"/>
</dbReference>
<dbReference type="Reactome" id="R-HSA-913709">
    <property type="pathway name" value="O-linked glycosylation of mucins"/>
</dbReference>
<dbReference type="Reactome" id="R-HSA-977068">
    <property type="pathway name" value="Termination of O-glycan biosynthesis"/>
</dbReference>
<dbReference type="BioGRID-ORCS" id="283463">
    <property type="hits" value="1 hit in 177 CRISPR screens"/>
</dbReference>
<dbReference type="ChiTaRS" id="MUC19">
    <property type="organism name" value="human"/>
</dbReference>
<dbReference type="GenomeRNAi" id="283463"/>
<dbReference type="Pharos" id="Q7Z5P9">
    <property type="development level" value="Tdark"/>
</dbReference>
<dbReference type="PRO" id="PR:Q7Z5P9"/>
<dbReference type="Proteomes" id="UP000005640">
    <property type="component" value="Unplaced"/>
</dbReference>
<dbReference type="RNAct" id="Q7Z5P9">
    <property type="molecule type" value="protein"/>
</dbReference>
<dbReference type="GO" id="GO:0005576">
    <property type="term" value="C:extracellular region"/>
    <property type="evidence" value="ECO:0007669"/>
    <property type="project" value="UniProtKB-SubCell"/>
</dbReference>
<dbReference type="GO" id="GO:0005796">
    <property type="term" value="C:Golgi lumen"/>
    <property type="evidence" value="ECO:0000304"/>
    <property type="project" value="Reactome"/>
</dbReference>
<dbReference type="GO" id="GO:0005886">
    <property type="term" value="C:plasma membrane"/>
    <property type="evidence" value="ECO:0000304"/>
    <property type="project" value="Reactome"/>
</dbReference>
<dbReference type="CDD" id="cd19941">
    <property type="entry name" value="TIL"/>
    <property type="match status" value="3"/>
</dbReference>
<dbReference type="FunFam" id="2.10.25.10:FF:000674">
    <property type="entry name" value="Mucin-2"/>
    <property type="match status" value="1"/>
</dbReference>
<dbReference type="Gene3D" id="2.10.25.10">
    <property type="entry name" value="Laminin"/>
    <property type="match status" value="3"/>
</dbReference>
<dbReference type="InterPro" id="IPR006207">
    <property type="entry name" value="Cys_knot_C"/>
</dbReference>
<dbReference type="InterPro" id="IPR036084">
    <property type="entry name" value="Ser_inhib-like_sf"/>
</dbReference>
<dbReference type="InterPro" id="IPR002919">
    <property type="entry name" value="TIL_dom"/>
</dbReference>
<dbReference type="InterPro" id="IPR014853">
    <property type="entry name" value="VWF/SSPO/ZAN-like_Cys-rich_dom"/>
</dbReference>
<dbReference type="InterPro" id="IPR001007">
    <property type="entry name" value="VWF_dom"/>
</dbReference>
<dbReference type="InterPro" id="IPR001846">
    <property type="entry name" value="VWF_type-D"/>
</dbReference>
<dbReference type="PANTHER" id="PTHR47246">
    <property type="entry name" value="MUCIN-19"/>
    <property type="match status" value="1"/>
</dbReference>
<dbReference type="PANTHER" id="PTHR47246:SF1">
    <property type="entry name" value="MUCIN-19"/>
    <property type="match status" value="1"/>
</dbReference>
<dbReference type="Pfam" id="PF08742">
    <property type="entry name" value="C8"/>
    <property type="match status" value="2"/>
</dbReference>
<dbReference type="Pfam" id="PF01826">
    <property type="entry name" value="TIL"/>
    <property type="match status" value="1"/>
</dbReference>
<dbReference type="Pfam" id="PF00094">
    <property type="entry name" value="VWD"/>
    <property type="match status" value="3"/>
</dbReference>
<dbReference type="SMART" id="SM00832">
    <property type="entry name" value="C8"/>
    <property type="match status" value="2"/>
</dbReference>
<dbReference type="SMART" id="SM00041">
    <property type="entry name" value="CT"/>
    <property type="match status" value="1"/>
</dbReference>
<dbReference type="SMART" id="SM00214">
    <property type="entry name" value="VWC"/>
    <property type="match status" value="3"/>
</dbReference>
<dbReference type="SMART" id="SM00215">
    <property type="entry name" value="VWC_out"/>
    <property type="match status" value="2"/>
</dbReference>
<dbReference type="SMART" id="SM00216">
    <property type="entry name" value="VWD"/>
    <property type="match status" value="3"/>
</dbReference>
<dbReference type="SUPFAM" id="SSF88633">
    <property type="entry name" value="Positive stranded ssRNA viruses"/>
    <property type="match status" value="1"/>
</dbReference>
<dbReference type="SUPFAM" id="SSF57567">
    <property type="entry name" value="Serine protease inhibitors"/>
    <property type="match status" value="3"/>
</dbReference>
<dbReference type="PROSITE" id="PS01185">
    <property type="entry name" value="CTCK_1"/>
    <property type="match status" value="1"/>
</dbReference>
<dbReference type="PROSITE" id="PS01225">
    <property type="entry name" value="CTCK_2"/>
    <property type="match status" value="1"/>
</dbReference>
<dbReference type="PROSITE" id="PS50184">
    <property type="entry name" value="VWFC_2"/>
    <property type="match status" value="1"/>
</dbReference>
<dbReference type="PROSITE" id="PS51233">
    <property type="entry name" value="VWFD"/>
    <property type="match status" value="3"/>
</dbReference>
<protein>
    <recommendedName>
        <fullName>Mucin-19</fullName>
        <shortName>MUC-19</shortName>
    </recommendedName>
</protein>